<protein>
    <recommendedName>
        <fullName>Hemoglobin subunit beta</fullName>
    </recommendedName>
    <alternativeName>
        <fullName>Beta-globin</fullName>
    </alternativeName>
    <alternativeName>
        <fullName>Hemoglobin beta chain</fullName>
    </alternativeName>
</protein>
<gene>
    <name type="primary">hbb</name>
</gene>
<dbReference type="PDB" id="1SPG">
    <property type="method" value="X-ray"/>
    <property type="resolution" value="1.95 A"/>
    <property type="chains" value="B=1-147"/>
</dbReference>
<dbReference type="PDBsum" id="1SPG"/>
<dbReference type="SMR" id="P56251"/>
<dbReference type="MINT" id="P56251"/>
<dbReference type="EvolutionaryTrace" id="P56251"/>
<dbReference type="GO" id="GO:0072562">
    <property type="term" value="C:blood microparticle"/>
    <property type="evidence" value="ECO:0007669"/>
    <property type="project" value="TreeGrafter"/>
</dbReference>
<dbReference type="GO" id="GO:0031838">
    <property type="term" value="C:haptoglobin-hemoglobin complex"/>
    <property type="evidence" value="ECO:0007669"/>
    <property type="project" value="TreeGrafter"/>
</dbReference>
<dbReference type="GO" id="GO:0005833">
    <property type="term" value="C:hemoglobin complex"/>
    <property type="evidence" value="ECO:0007669"/>
    <property type="project" value="InterPro"/>
</dbReference>
<dbReference type="GO" id="GO:0031720">
    <property type="term" value="F:haptoglobin binding"/>
    <property type="evidence" value="ECO:0007669"/>
    <property type="project" value="TreeGrafter"/>
</dbReference>
<dbReference type="GO" id="GO:0020037">
    <property type="term" value="F:heme binding"/>
    <property type="evidence" value="ECO:0007669"/>
    <property type="project" value="InterPro"/>
</dbReference>
<dbReference type="GO" id="GO:0046872">
    <property type="term" value="F:metal ion binding"/>
    <property type="evidence" value="ECO:0007669"/>
    <property type="project" value="UniProtKB-KW"/>
</dbReference>
<dbReference type="GO" id="GO:0043177">
    <property type="term" value="F:organic acid binding"/>
    <property type="evidence" value="ECO:0007669"/>
    <property type="project" value="TreeGrafter"/>
</dbReference>
<dbReference type="GO" id="GO:0019825">
    <property type="term" value="F:oxygen binding"/>
    <property type="evidence" value="ECO:0007669"/>
    <property type="project" value="InterPro"/>
</dbReference>
<dbReference type="GO" id="GO:0005344">
    <property type="term" value="F:oxygen carrier activity"/>
    <property type="evidence" value="ECO:0007669"/>
    <property type="project" value="UniProtKB-KW"/>
</dbReference>
<dbReference type="GO" id="GO:0004601">
    <property type="term" value="F:peroxidase activity"/>
    <property type="evidence" value="ECO:0007669"/>
    <property type="project" value="TreeGrafter"/>
</dbReference>
<dbReference type="GO" id="GO:0042744">
    <property type="term" value="P:hydrogen peroxide catabolic process"/>
    <property type="evidence" value="ECO:0007669"/>
    <property type="project" value="TreeGrafter"/>
</dbReference>
<dbReference type="CDD" id="cd08925">
    <property type="entry name" value="Hb-beta-like"/>
    <property type="match status" value="1"/>
</dbReference>
<dbReference type="FunFam" id="1.10.490.10:FF:000001">
    <property type="entry name" value="Hemoglobin subunit beta"/>
    <property type="match status" value="1"/>
</dbReference>
<dbReference type="Gene3D" id="1.10.490.10">
    <property type="entry name" value="Globins"/>
    <property type="match status" value="1"/>
</dbReference>
<dbReference type="InterPro" id="IPR000971">
    <property type="entry name" value="Globin"/>
</dbReference>
<dbReference type="InterPro" id="IPR009050">
    <property type="entry name" value="Globin-like_sf"/>
</dbReference>
<dbReference type="InterPro" id="IPR012292">
    <property type="entry name" value="Globin/Proto"/>
</dbReference>
<dbReference type="InterPro" id="IPR002337">
    <property type="entry name" value="Hemoglobin_b"/>
</dbReference>
<dbReference type="InterPro" id="IPR050056">
    <property type="entry name" value="Hemoglobin_oxygen_transport"/>
</dbReference>
<dbReference type="PANTHER" id="PTHR11442">
    <property type="entry name" value="HEMOGLOBIN FAMILY MEMBER"/>
    <property type="match status" value="1"/>
</dbReference>
<dbReference type="PANTHER" id="PTHR11442:SF102">
    <property type="entry name" value="HEMOGLOBIN SUBUNIT BETA-1-RELATED"/>
    <property type="match status" value="1"/>
</dbReference>
<dbReference type="Pfam" id="PF00042">
    <property type="entry name" value="Globin"/>
    <property type="match status" value="1"/>
</dbReference>
<dbReference type="PRINTS" id="PR00814">
    <property type="entry name" value="BETAHAEM"/>
</dbReference>
<dbReference type="SUPFAM" id="SSF46458">
    <property type="entry name" value="Globin-like"/>
    <property type="match status" value="1"/>
</dbReference>
<dbReference type="PROSITE" id="PS01033">
    <property type="entry name" value="GLOBIN"/>
    <property type="match status" value="1"/>
</dbReference>
<reference key="1">
    <citation type="journal article" date="1996" name="Nat. Struct. Biol.">
        <title>Structural basis for the root effect in haemoglobin.</title>
        <authorList>
            <person name="Mylvaganam S.E."/>
            <person name="Bonaventura C."/>
            <person name="Bonaventura J."/>
            <person name="Getzoff E.D."/>
        </authorList>
    </citation>
    <scope>PROTEIN SEQUENCE</scope>
    <scope>X-RAY CRYSTALLOGRAPHY (1.95 ANGSTROMS) IN COMPLEX WITH HEME</scope>
</reference>
<feature type="chain" id="PRO_0000052988" description="Hemoglobin subunit beta">
    <location>
        <begin position="1"/>
        <end position="147"/>
    </location>
</feature>
<feature type="domain" description="Globin" evidence="2">
    <location>
        <begin position="2"/>
        <end position="147"/>
    </location>
</feature>
<feature type="binding site" description="distal binding residue" evidence="1">
    <location>
        <position position="63"/>
    </location>
    <ligand>
        <name>heme b</name>
        <dbReference type="ChEBI" id="CHEBI:60344"/>
    </ligand>
    <ligandPart>
        <name>Fe</name>
        <dbReference type="ChEBI" id="CHEBI:18248"/>
    </ligandPart>
</feature>
<feature type="binding site" description="proximal binding residue" evidence="3 4">
    <location>
        <position position="92"/>
    </location>
    <ligand>
        <name>heme b</name>
        <dbReference type="ChEBI" id="CHEBI:60344"/>
    </ligand>
    <ligandPart>
        <name>Fe</name>
        <dbReference type="ChEBI" id="CHEBI:18248"/>
    </ligandPart>
</feature>
<feature type="helix" evidence="5">
    <location>
        <begin position="5"/>
        <end position="15"/>
    </location>
</feature>
<feature type="helix" evidence="5">
    <location>
        <begin position="20"/>
        <end position="34"/>
    </location>
</feature>
<feature type="helix" evidence="5">
    <location>
        <begin position="36"/>
        <end position="41"/>
    </location>
</feature>
<feature type="helix" evidence="5">
    <location>
        <begin position="43"/>
        <end position="45"/>
    </location>
</feature>
<feature type="helix" evidence="5">
    <location>
        <begin position="51"/>
        <end position="56"/>
    </location>
</feature>
<feature type="helix" evidence="5">
    <location>
        <begin position="58"/>
        <end position="75"/>
    </location>
</feature>
<feature type="turn" evidence="5">
    <location>
        <begin position="78"/>
        <end position="80"/>
    </location>
</feature>
<feature type="helix" evidence="5">
    <location>
        <begin position="81"/>
        <end position="84"/>
    </location>
</feature>
<feature type="helix" evidence="5">
    <location>
        <begin position="86"/>
        <end position="94"/>
    </location>
</feature>
<feature type="helix" evidence="5">
    <location>
        <begin position="101"/>
        <end position="118"/>
    </location>
</feature>
<feature type="turn" evidence="5">
    <location>
        <begin position="120"/>
        <end position="122"/>
    </location>
</feature>
<feature type="helix" evidence="5">
    <location>
        <begin position="125"/>
        <end position="142"/>
    </location>
</feature>
<comment type="function">
    <text>Involved in oxygen transport from gills to the various peripheral tissues.</text>
</comment>
<comment type="subunit">
    <text>Heterotetramer of two alpha chains and two beta chains.</text>
</comment>
<comment type="tissue specificity">
    <text>Red blood cells.</text>
</comment>
<comment type="similarity">
    <text evidence="2">Belongs to the globin family.</text>
</comment>
<keyword id="KW-0002">3D-structure</keyword>
<keyword id="KW-0903">Direct protein sequencing</keyword>
<keyword id="KW-0349">Heme</keyword>
<keyword id="KW-0408">Iron</keyword>
<keyword id="KW-0479">Metal-binding</keyword>
<keyword id="KW-0561">Oxygen transport</keyword>
<keyword id="KW-0813">Transport</keyword>
<accession>P56251</accession>
<evidence type="ECO:0000250" key="1">
    <source>
        <dbReference type="UniProtKB" id="P80044"/>
    </source>
</evidence>
<evidence type="ECO:0000255" key="2">
    <source>
        <dbReference type="PROSITE-ProRule" id="PRU00238"/>
    </source>
</evidence>
<evidence type="ECO:0000269" key="3">
    <source>
    </source>
</evidence>
<evidence type="ECO:0007744" key="4">
    <source>
        <dbReference type="PDB" id="1SPG"/>
    </source>
</evidence>
<evidence type="ECO:0007829" key="5">
    <source>
        <dbReference type="PDB" id="1SPG"/>
    </source>
</evidence>
<name>HBB_LEIXA</name>
<sequence>VDWTDAERAAIKALWGKIDVGEIGPQALSRLLIVYPWTQRHFKGFGNISTNAAILGNAKVAEHGKTVMGGLDRAVQNMDNIKNVYKQLSIKHSEKIHVDPDNFRLLGEIITMCVGAKFGPSAFTPEIHEAWQKFLAVVVSALGRQYH</sequence>
<organism>
    <name type="scientific">Leiostomus xanthurus</name>
    <name type="common">Spot</name>
    <dbReference type="NCBI Taxonomy" id="59837"/>
    <lineage>
        <taxon>Eukaryota</taxon>
        <taxon>Metazoa</taxon>
        <taxon>Chordata</taxon>
        <taxon>Craniata</taxon>
        <taxon>Vertebrata</taxon>
        <taxon>Euteleostomi</taxon>
        <taxon>Actinopterygii</taxon>
        <taxon>Neopterygii</taxon>
        <taxon>Teleostei</taxon>
        <taxon>Neoteleostei</taxon>
        <taxon>Acanthomorphata</taxon>
        <taxon>Eupercaria</taxon>
        <taxon>Sciaenidae</taxon>
        <taxon>Leiostomus</taxon>
    </lineage>
</organism>
<proteinExistence type="evidence at protein level"/>